<gene>
    <name type="ordered locus">FPV011</name>
</gene>
<organism>
    <name type="scientific">Fowlpox virus (strain NVSL)</name>
    <name type="common">FPV</name>
    <dbReference type="NCBI Taxonomy" id="928301"/>
    <lineage>
        <taxon>Viruses</taxon>
        <taxon>Varidnaviria</taxon>
        <taxon>Bamfordvirae</taxon>
        <taxon>Nucleocytoviricota</taxon>
        <taxon>Pokkesviricetes</taxon>
        <taxon>Chitovirales</taxon>
        <taxon>Poxviridae</taxon>
        <taxon>Chordopoxvirinae</taxon>
        <taxon>Avipoxvirus</taxon>
        <taxon>Fowlpox virus</taxon>
    </lineage>
</organism>
<proteinExistence type="inferred from homology"/>
<evidence type="ECO:0000305" key="1"/>
<sequence>MQKIKLKVSPFFKNLFGPPIEIEEAAGMVSHAANLFASVQLWECAGKAFFKSGDMLLQKNKNSIAAASSFVDAANAFKKIDSYEAINCLSKAIEVYTCLGKFYTVARCHMNIAAIYENDILELDKAIFHYENASGYYGGEGYNKLSDDCMLLIARLSIQKEDFDRAGKIFEQVGYNRMNTMLSKYESRHQLLYAIMCYLCSDVSRAKRSLDKYKDIFPAFKDFKECKFIEKILAACETKNIETFTSAIEEYDHGNTIDEALMSMLLTIRKATFEDEVE</sequence>
<name>V011_FOWPN</name>
<dbReference type="EMBL" id="AF198100">
    <property type="protein sequence ID" value="AAF44355.1"/>
    <property type="molecule type" value="Genomic_DNA"/>
</dbReference>
<dbReference type="RefSeq" id="NP_038974.1">
    <property type="nucleotide sequence ID" value="NC_002188.1"/>
</dbReference>
<dbReference type="SMR" id="Q9J5J0"/>
<dbReference type="GeneID" id="1486730"/>
<dbReference type="KEGG" id="vg:1486730"/>
<dbReference type="Proteomes" id="UP000008597">
    <property type="component" value="Segment"/>
</dbReference>
<dbReference type="GO" id="GO:0005483">
    <property type="term" value="F:soluble NSF attachment protein activity"/>
    <property type="evidence" value="ECO:0007669"/>
    <property type="project" value="TreeGrafter"/>
</dbReference>
<dbReference type="GO" id="GO:0019905">
    <property type="term" value="F:syntaxin binding"/>
    <property type="evidence" value="ECO:0007669"/>
    <property type="project" value="TreeGrafter"/>
</dbReference>
<dbReference type="GO" id="GO:0015031">
    <property type="term" value="P:protein transport"/>
    <property type="evidence" value="ECO:0007669"/>
    <property type="project" value="UniProtKB-KW"/>
</dbReference>
<dbReference type="GO" id="GO:0035494">
    <property type="term" value="P:SNARE complex disassembly"/>
    <property type="evidence" value="ECO:0007669"/>
    <property type="project" value="TreeGrafter"/>
</dbReference>
<dbReference type="CDD" id="cd15832">
    <property type="entry name" value="SNAP"/>
    <property type="match status" value="1"/>
</dbReference>
<dbReference type="Gene3D" id="1.25.40.10">
    <property type="entry name" value="Tetratricopeptide repeat domain"/>
    <property type="match status" value="1"/>
</dbReference>
<dbReference type="InterPro" id="IPR000744">
    <property type="entry name" value="NSF_attach"/>
</dbReference>
<dbReference type="InterPro" id="IPR011990">
    <property type="entry name" value="TPR-like_helical_dom_sf"/>
</dbReference>
<dbReference type="PANTHER" id="PTHR13768:SF8">
    <property type="entry name" value="ALPHA-SOLUBLE NSF ATTACHMENT PROTEIN"/>
    <property type="match status" value="1"/>
</dbReference>
<dbReference type="PANTHER" id="PTHR13768">
    <property type="entry name" value="SOLUBLE NSF ATTACHMENT PROTEIN SNAP"/>
    <property type="match status" value="1"/>
</dbReference>
<dbReference type="Pfam" id="PF14938">
    <property type="entry name" value="SNAP"/>
    <property type="match status" value="1"/>
</dbReference>
<dbReference type="PRINTS" id="PR00448">
    <property type="entry name" value="NSFATTACHMNT"/>
</dbReference>
<dbReference type="SUPFAM" id="SSF48452">
    <property type="entry name" value="TPR-like"/>
    <property type="match status" value="1"/>
</dbReference>
<comment type="similarity">
    <text evidence="1">Belongs to the SNAP family.</text>
</comment>
<feature type="chain" id="PRO_0000219077" description="Soluble NSF attachment protein homolog FPV011">
    <location>
        <begin position="1"/>
        <end position="278"/>
    </location>
</feature>
<protein>
    <recommendedName>
        <fullName>Soluble NSF attachment protein homolog FPV011</fullName>
    </recommendedName>
</protein>
<keyword id="KW-0653">Protein transport</keyword>
<keyword id="KW-1185">Reference proteome</keyword>
<keyword id="KW-0813">Transport</keyword>
<reference key="1">
    <citation type="journal article" date="2000" name="J. Virol.">
        <title>The genome of fowlpox virus.</title>
        <authorList>
            <person name="Afonso C.L."/>
            <person name="Tulman E.R."/>
            <person name="Lu Z."/>
            <person name="Zsak L."/>
            <person name="Kutish G.F."/>
            <person name="Rock D.L."/>
        </authorList>
    </citation>
    <scope>NUCLEOTIDE SEQUENCE [LARGE SCALE GENOMIC DNA]</scope>
</reference>
<organismHost>
    <name type="scientific">Vertebrata</name>
    <dbReference type="NCBI Taxonomy" id="7742"/>
</organismHost>
<accession>Q9J5J0</accession>